<proteinExistence type="inferred from homology"/>
<organism>
    <name type="scientific">Tropheryma whipplei (strain TW08/27)</name>
    <name type="common">Whipple's bacillus</name>
    <dbReference type="NCBI Taxonomy" id="218496"/>
    <lineage>
        <taxon>Bacteria</taxon>
        <taxon>Bacillati</taxon>
        <taxon>Actinomycetota</taxon>
        <taxon>Actinomycetes</taxon>
        <taxon>Micrococcales</taxon>
        <taxon>Tropherymataceae</taxon>
        <taxon>Tropheryma</taxon>
    </lineage>
</organism>
<gene>
    <name evidence="1" type="primary">rplD</name>
    <name type="ordered locus">TW208</name>
</gene>
<feature type="chain" id="PRO_0000129305" description="Large ribosomal subunit protein uL4">
    <location>
        <begin position="1"/>
        <end position="248"/>
    </location>
</feature>
<feature type="region of interest" description="Disordered" evidence="2">
    <location>
        <begin position="48"/>
        <end position="95"/>
    </location>
</feature>
<feature type="region of interest" description="Disordered" evidence="2">
    <location>
        <begin position="210"/>
        <end position="248"/>
    </location>
</feature>
<feature type="compositionally biased region" description="Basic and acidic residues" evidence="2">
    <location>
        <begin position="233"/>
        <end position="248"/>
    </location>
</feature>
<accession>Q83I77</accession>
<evidence type="ECO:0000255" key="1">
    <source>
        <dbReference type="HAMAP-Rule" id="MF_01328"/>
    </source>
</evidence>
<evidence type="ECO:0000256" key="2">
    <source>
        <dbReference type="SAM" id="MobiDB-lite"/>
    </source>
</evidence>
<evidence type="ECO:0000305" key="3"/>
<keyword id="KW-0687">Ribonucleoprotein</keyword>
<keyword id="KW-0689">Ribosomal protein</keyword>
<keyword id="KW-0694">RNA-binding</keyword>
<keyword id="KW-0699">rRNA-binding</keyword>
<name>RL4_TROW8</name>
<protein>
    <recommendedName>
        <fullName evidence="1">Large ribosomal subunit protein uL4</fullName>
    </recommendedName>
    <alternativeName>
        <fullName evidence="3">50S ribosomal protein L4</fullName>
    </alternativeName>
</protein>
<comment type="function">
    <text evidence="1">One of the primary rRNA binding proteins, this protein initially binds near the 5'-end of the 23S rRNA. It is important during the early stages of 50S assembly. It makes multiple contacts with different domains of the 23S rRNA in the assembled 50S subunit and ribosome.</text>
</comment>
<comment type="function">
    <text evidence="1">Forms part of the polypeptide exit tunnel.</text>
</comment>
<comment type="subunit">
    <text evidence="1">Part of the 50S ribosomal subunit.</text>
</comment>
<comment type="similarity">
    <text evidence="1">Belongs to the universal ribosomal protein uL4 family.</text>
</comment>
<sequence length="248" mass="26339">MSPSATVFDIGGNAVGTLQLVGHLFDSDPNLHLIHQVVVAQQAAFRQGTHKTKSRAEVSGSGRKPFRQKGTGNARCGSTRAPQMRGGGVVHGPVPRSYVHRTPKKMIKAALAGCLTNRARAGRVHIVDSFGDTPSVADALTLFQITGLSSKLLVVAQASDSVAYRSVRNIPGVRLVHVGQLNSYDVLRSDDVLFTRGAYNVFVGPSGDLAFSEDRDNPGTSLPKSPTPEDSSDATKARSSRHDDRTGA</sequence>
<dbReference type="EMBL" id="BX251410">
    <property type="protein sequence ID" value="CAD66885.1"/>
    <property type="molecule type" value="Genomic_DNA"/>
</dbReference>
<dbReference type="RefSeq" id="WP_011096166.1">
    <property type="nucleotide sequence ID" value="NC_004551.1"/>
</dbReference>
<dbReference type="SMR" id="Q83I77"/>
<dbReference type="GeneID" id="67387984"/>
<dbReference type="KEGG" id="tws:TW208"/>
<dbReference type="HOGENOM" id="CLU_041575_5_0_11"/>
<dbReference type="GO" id="GO:1990904">
    <property type="term" value="C:ribonucleoprotein complex"/>
    <property type="evidence" value="ECO:0007669"/>
    <property type="project" value="UniProtKB-KW"/>
</dbReference>
<dbReference type="GO" id="GO:0005840">
    <property type="term" value="C:ribosome"/>
    <property type="evidence" value="ECO:0007669"/>
    <property type="project" value="UniProtKB-KW"/>
</dbReference>
<dbReference type="GO" id="GO:0019843">
    <property type="term" value="F:rRNA binding"/>
    <property type="evidence" value="ECO:0007669"/>
    <property type="project" value="UniProtKB-UniRule"/>
</dbReference>
<dbReference type="GO" id="GO:0003735">
    <property type="term" value="F:structural constituent of ribosome"/>
    <property type="evidence" value="ECO:0007669"/>
    <property type="project" value="InterPro"/>
</dbReference>
<dbReference type="GO" id="GO:0006412">
    <property type="term" value="P:translation"/>
    <property type="evidence" value="ECO:0007669"/>
    <property type="project" value="UniProtKB-UniRule"/>
</dbReference>
<dbReference type="Gene3D" id="3.40.1370.10">
    <property type="match status" value="1"/>
</dbReference>
<dbReference type="HAMAP" id="MF_01328_B">
    <property type="entry name" value="Ribosomal_uL4_B"/>
    <property type="match status" value="1"/>
</dbReference>
<dbReference type="InterPro" id="IPR002136">
    <property type="entry name" value="Ribosomal_uL4"/>
</dbReference>
<dbReference type="InterPro" id="IPR013005">
    <property type="entry name" value="Ribosomal_uL4-like"/>
</dbReference>
<dbReference type="InterPro" id="IPR023574">
    <property type="entry name" value="Ribosomal_uL4_dom_sf"/>
</dbReference>
<dbReference type="NCBIfam" id="TIGR03953">
    <property type="entry name" value="rplD_bact"/>
    <property type="match status" value="1"/>
</dbReference>
<dbReference type="PANTHER" id="PTHR10746">
    <property type="entry name" value="50S RIBOSOMAL PROTEIN L4"/>
    <property type="match status" value="1"/>
</dbReference>
<dbReference type="PANTHER" id="PTHR10746:SF6">
    <property type="entry name" value="LARGE RIBOSOMAL SUBUNIT PROTEIN UL4M"/>
    <property type="match status" value="1"/>
</dbReference>
<dbReference type="Pfam" id="PF00573">
    <property type="entry name" value="Ribosomal_L4"/>
    <property type="match status" value="1"/>
</dbReference>
<dbReference type="SUPFAM" id="SSF52166">
    <property type="entry name" value="Ribosomal protein L4"/>
    <property type="match status" value="1"/>
</dbReference>
<reference key="1">
    <citation type="journal article" date="2003" name="Lancet">
        <title>Sequencing and analysis of the genome of the Whipple's disease bacterium Tropheryma whipplei.</title>
        <authorList>
            <person name="Bentley S.D."/>
            <person name="Maiwald M."/>
            <person name="Murphy L.D."/>
            <person name="Pallen M.J."/>
            <person name="Yeats C.A."/>
            <person name="Dover L.G."/>
            <person name="Norbertczak H.T."/>
            <person name="Besra G.S."/>
            <person name="Quail M.A."/>
            <person name="Harris D.E."/>
            <person name="von Herbay A."/>
            <person name="Goble A."/>
            <person name="Rutter S."/>
            <person name="Squares R."/>
            <person name="Squares S."/>
            <person name="Barrell B.G."/>
            <person name="Parkhill J."/>
            <person name="Relman D.A."/>
        </authorList>
    </citation>
    <scope>NUCLEOTIDE SEQUENCE [LARGE SCALE GENOMIC DNA]</scope>
    <source>
        <strain>TW08/27</strain>
    </source>
</reference>